<organism>
    <name type="scientific">Rhodococcus jostii (strain RHA1)</name>
    <dbReference type="NCBI Taxonomy" id="101510"/>
    <lineage>
        <taxon>Bacteria</taxon>
        <taxon>Bacillati</taxon>
        <taxon>Actinomycetota</taxon>
        <taxon>Actinomycetes</taxon>
        <taxon>Mycobacteriales</taxon>
        <taxon>Nocardiaceae</taxon>
        <taxon>Rhodococcus</taxon>
    </lineage>
</organism>
<reference key="1">
    <citation type="journal article" date="2006" name="Proc. Natl. Acad. Sci. U.S.A.">
        <title>The complete genome of Rhodococcus sp. RHA1 provides insights into a catabolic powerhouse.</title>
        <authorList>
            <person name="McLeod M.P."/>
            <person name="Warren R.L."/>
            <person name="Hsiao W.W.L."/>
            <person name="Araki N."/>
            <person name="Myhre M."/>
            <person name="Fernandes C."/>
            <person name="Miyazawa D."/>
            <person name="Wong W."/>
            <person name="Lillquist A.L."/>
            <person name="Wang D."/>
            <person name="Dosanjh M."/>
            <person name="Hara H."/>
            <person name="Petrescu A."/>
            <person name="Morin R.D."/>
            <person name="Yang G."/>
            <person name="Stott J.M."/>
            <person name="Schein J.E."/>
            <person name="Shin H."/>
            <person name="Smailus D."/>
            <person name="Siddiqui A.S."/>
            <person name="Marra M.A."/>
            <person name="Jones S.J.M."/>
            <person name="Holt R."/>
            <person name="Brinkman F.S.L."/>
            <person name="Miyauchi K."/>
            <person name="Fukuda M."/>
            <person name="Davies J.E."/>
            <person name="Mohn W.W."/>
            <person name="Eltis L.D."/>
        </authorList>
    </citation>
    <scope>NUCLEOTIDE SEQUENCE [LARGE SCALE GENOMIC DNA]</scope>
    <source>
        <strain>RHA1</strain>
    </source>
</reference>
<feature type="chain" id="PRO_0000323936" description="Uridylate kinase">
    <location>
        <begin position="1"/>
        <end position="242"/>
    </location>
</feature>
<feature type="binding site" evidence="1">
    <location>
        <begin position="17"/>
        <end position="20"/>
    </location>
    <ligand>
        <name>ATP</name>
        <dbReference type="ChEBI" id="CHEBI:30616"/>
    </ligand>
</feature>
<feature type="binding site" evidence="1">
    <location>
        <position position="58"/>
    </location>
    <ligand>
        <name>UMP</name>
        <dbReference type="ChEBI" id="CHEBI:57865"/>
    </ligand>
</feature>
<feature type="binding site" evidence="1">
    <location>
        <position position="59"/>
    </location>
    <ligand>
        <name>ATP</name>
        <dbReference type="ChEBI" id="CHEBI:30616"/>
    </ligand>
</feature>
<feature type="binding site" evidence="1">
    <location>
        <position position="63"/>
    </location>
    <ligand>
        <name>ATP</name>
        <dbReference type="ChEBI" id="CHEBI:30616"/>
    </ligand>
</feature>
<feature type="binding site" evidence="1">
    <location>
        <position position="78"/>
    </location>
    <ligand>
        <name>UMP</name>
        <dbReference type="ChEBI" id="CHEBI:57865"/>
    </ligand>
</feature>
<feature type="binding site" evidence="1">
    <location>
        <begin position="139"/>
        <end position="146"/>
    </location>
    <ligand>
        <name>UMP</name>
        <dbReference type="ChEBI" id="CHEBI:57865"/>
    </ligand>
</feature>
<feature type="binding site" evidence="1">
    <location>
        <position position="172"/>
    </location>
    <ligand>
        <name>ATP</name>
        <dbReference type="ChEBI" id="CHEBI:30616"/>
    </ligand>
</feature>
<feature type="binding site" evidence="1">
    <location>
        <position position="175"/>
    </location>
    <ligand>
        <name>ATP</name>
        <dbReference type="ChEBI" id="CHEBI:30616"/>
    </ligand>
</feature>
<evidence type="ECO:0000255" key="1">
    <source>
        <dbReference type="HAMAP-Rule" id="MF_01220"/>
    </source>
</evidence>
<accession>Q0S283</accession>
<sequence>MSEPANERTGFHRVLLKLGGEMFGGGKVGLDPDVVTKVAEQIAEVVRSGVQVAVVIGGGNFFRGAELQQRGLDRARSDYMGMLGTVMNCLALQDFLEKEGIDSRVQTAITMGQVAEPYIPLRAQRHLEKGRVVIFGAGMGMPYFSTDTTAAQRALEIGAEVVLMAKAVDGVFTADPNLDPTATMYAQITHREVIEQGLKVADATAFSLCMDNEMPIMVFNLLTEGNIARAVSGEKIGTLVKS</sequence>
<keyword id="KW-0067">ATP-binding</keyword>
<keyword id="KW-0963">Cytoplasm</keyword>
<keyword id="KW-0418">Kinase</keyword>
<keyword id="KW-0547">Nucleotide-binding</keyword>
<keyword id="KW-0665">Pyrimidine biosynthesis</keyword>
<keyword id="KW-0808">Transferase</keyword>
<dbReference type="EC" id="2.7.4.22" evidence="1"/>
<dbReference type="EMBL" id="CP000431">
    <property type="protein sequence ID" value="ABG98353.1"/>
    <property type="molecule type" value="Genomic_DNA"/>
</dbReference>
<dbReference type="RefSeq" id="WP_009479740.1">
    <property type="nucleotide sequence ID" value="NC_008268.1"/>
</dbReference>
<dbReference type="SMR" id="Q0S283"/>
<dbReference type="KEGG" id="rha:RHA1_ro06580"/>
<dbReference type="eggNOG" id="COG0528">
    <property type="taxonomic scope" value="Bacteria"/>
</dbReference>
<dbReference type="HOGENOM" id="CLU_033861_0_0_11"/>
<dbReference type="OrthoDB" id="9807458at2"/>
<dbReference type="UniPathway" id="UPA00159">
    <property type="reaction ID" value="UER00275"/>
</dbReference>
<dbReference type="Proteomes" id="UP000008710">
    <property type="component" value="Chromosome"/>
</dbReference>
<dbReference type="GO" id="GO:0005737">
    <property type="term" value="C:cytoplasm"/>
    <property type="evidence" value="ECO:0007669"/>
    <property type="project" value="UniProtKB-SubCell"/>
</dbReference>
<dbReference type="GO" id="GO:0005524">
    <property type="term" value="F:ATP binding"/>
    <property type="evidence" value="ECO:0007669"/>
    <property type="project" value="UniProtKB-KW"/>
</dbReference>
<dbReference type="GO" id="GO:0033862">
    <property type="term" value="F:UMP kinase activity"/>
    <property type="evidence" value="ECO:0007669"/>
    <property type="project" value="UniProtKB-EC"/>
</dbReference>
<dbReference type="GO" id="GO:0044210">
    <property type="term" value="P:'de novo' CTP biosynthetic process"/>
    <property type="evidence" value="ECO:0007669"/>
    <property type="project" value="UniProtKB-UniRule"/>
</dbReference>
<dbReference type="GO" id="GO:0006225">
    <property type="term" value="P:UDP biosynthetic process"/>
    <property type="evidence" value="ECO:0007669"/>
    <property type="project" value="TreeGrafter"/>
</dbReference>
<dbReference type="CDD" id="cd04254">
    <property type="entry name" value="AAK_UMPK-PyrH-Ec"/>
    <property type="match status" value="1"/>
</dbReference>
<dbReference type="FunFam" id="3.40.1160.10:FF:000001">
    <property type="entry name" value="Uridylate kinase"/>
    <property type="match status" value="1"/>
</dbReference>
<dbReference type="Gene3D" id="3.40.1160.10">
    <property type="entry name" value="Acetylglutamate kinase-like"/>
    <property type="match status" value="1"/>
</dbReference>
<dbReference type="HAMAP" id="MF_01220_B">
    <property type="entry name" value="PyrH_B"/>
    <property type="match status" value="1"/>
</dbReference>
<dbReference type="InterPro" id="IPR036393">
    <property type="entry name" value="AceGlu_kinase-like_sf"/>
</dbReference>
<dbReference type="InterPro" id="IPR001048">
    <property type="entry name" value="Asp/Glu/Uridylate_kinase"/>
</dbReference>
<dbReference type="InterPro" id="IPR011817">
    <property type="entry name" value="Uridylate_kinase"/>
</dbReference>
<dbReference type="InterPro" id="IPR015963">
    <property type="entry name" value="Uridylate_kinase_bac"/>
</dbReference>
<dbReference type="NCBIfam" id="TIGR02075">
    <property type="entry name" value="pyrH_bact"/>
    <property type="match status" value="1"/>
</dbReference>
<dbReference type="PANTHER" id="PTHR42833">
    <property type="entry name" value="URIDYLATE KINASE"/>
    <property type="match status" value="1"/>
</dbReference>
<dbReference type="PANTHER" id="PTHR42833:SF4">
    <property type="entry name" value="URIDYLATE KINASE PUMPKIN, CHLOROPLASTIC"/>
    <property type="match status" value="1"/>
</dbReference>
<dbReference type="Pfam" id="PF00696">
    <property type="entry name" value="AA_kinase"/>
    <property type="match status" value="1"/>
</dbReference>
<dbReference type="PIRSF" id="PIRSF005650">
    <property type="entry name" value="Uridylate_kin"/>
    <property type="match status" value="1"/>
</dbReference>
<dbReference type="SUPFAM" id="SSF53633">
    <property type="entry name" value="Carbamate kinase-like"/>
    <property type="match status" value="1"/>
</dbReference>
<gene>
    <name evidence="1" type="primary">pyrH</name>
    <name type="ordered locus">RHA1_ro06580</name>
</gene>
<comment type="function">
    <text evidence="1">Catalyzes the reversible phosphorylation of UMP to UDP.</text>
</comment>
<comment type="catalytic activity">
    <reaction evidence="1">
        <text>UMP + ATP = UDP + ADP</text>
        <dbReference type="Rhea" id="RHEA:24400"/>
        <dbReference type="ChEBI" id="CHEBI:30616"/>
        <dbReference type="ChEBI" id="CHEBI:57865"/>
        <dbReference type="ChEBI" id="CHEBI:58223"/>
        <dbReference type="ChEBI" id="CHEBI:456216"/>
        <dbReference type="EC" id="2.7.4.22"/>
    </reaction>
</comment>
<comment type="activity regulation">
    <text evidence="1">Inhibited by UTP.</text>
</comment>
<comment type="pathway">
    <text evidence="1">Pyrimidine metabolism; CTP biosynthesis via de novo pathway; UDP from UMP (UMPK route): step 1/1.</text>
</comment>
<comment type="subunit">
    <text evidence="1">Homohexamer.</text>
</comment>
<comment type="subcellular location">
    <subcellularLocation>
        <location evidence="1">Cytoplasm</location>
    </subcellularLocation>
</comment>
<comment type="similarity">
    <text evidence="1">Belongs to the UMP kinase family.</text>
</comment>
<proteinExistence type="inferred from homology"/>
<protein>
    <recommendedName>
        <fullName evidence="1">Uridylate kinase</fullName>
        <shortName evidence="1">UK</shortName>
        <ecNumber evidence="1">2.7.4.22</ecNumber>
    </recommendedName>
    <alternativeName>
        <fullName evidence="1">Uridine monophosphate kinase</fullName>
        <shortName evidence="1">UMP kinase</shortName>
        <shortName evidence="1">UMPK</shortName>
    </alternativeName>
</protein>
<name>PYRH_RHOJR</name>